<proteinExistence type="inferred from homology"/>
<evidence type="ECO:0000255" key="1">
    <source>
        <dbReference type="HAMAP-Rule" id="MF_00537"/>
    </source>
</evidence>
<evidence type="ECO:0000305" key="2"/>
<keyword id="KW-1185">Reference proteome</keyword>
<keyword id="KW-0687">Ribonucleoprotein</keyword>
<keyword id="KW-0689">Ribosomal protein</keyword>
<keyword id="KW-0694">RNA-binding</keyword>
<keyword id="KW-0699">rRNA-binding</keyword>
<organism>
    <name type="scientific">Synechococcus sp. (strain JA-2-3B'a(2-13))</name>
    <name type="common">Cyanobacteria bacterium Yellowstone B-Prime</name>
    <dbReference type="NCBI Taxonomy" id="321332"/>
    <lineage>
        <taxon>Bacteria</taxon>
        <taxon>Bacillati</taxon>
        <taxon>Cyanobacteriota</taxon>
        <taxon>Cyanophyceae</taxon>
        <taxon>Synechococcales</taxon>
        <taxon>Synechococcaceae</taxon>
        <taxon>Synechococcus</taxon>
    </lineage>
</organism>
<dbReference type="EMBL" id="CP000240">
    <property type="protein sequence ID" value="ABD02335.1"/>
    <property type="molecule type" value="Genomic_DNA"/>
</dbReference>
<dbReference type="RefSeq" id="WP_011432985.1">
    <property type="nucleotide sequence ID" value="NC_007776.1"/>
</dbReference>
<dbReference type="SMR" id="Q2JLR9"/>
<dbReference type="STRING" id="321332.CYB_1362"/>
<dbReference type="KEGG" id="cyb:CYB_1362"/>
<dbReference type="eggNOG" id="COG0199">
    <property type="taxonomic scope" value="Bacteria"/>
</dbReference>
<dbReference type="HOGENOM" id="CLU_139869_0_1_3"/>
<dbReference type="OrthoDB" id="9810484at2"/>
<dbReference type="Proteomes" id="UP000001938">
    <property type="component" value="Chromosome"/>
</dbReference>
<dbReference type="GO" id="GO:0005737">
    <property type="term" value="C:cytoplasm"/>
    <property type="evidence" value="ECO:0007669"/>
    <property type="project" value="UniProtKB-ARBA"/>
</dbReference>
<dbReference type="GO" id="GO:0015935">
    <property type="term" value="C:small ribosomal subunit"/>
    <property type="evidence" value="ECO:0007669"/>
    <property type="project" value="TreeGrafter"/>
</dbReference>
<dbReference type="GO" id="GO:0019843">
    <property type="term" value="F:rRNA binding"/>
    <property type="evidence" value="ECO:0007669"/>
    <property type="project" value="UniProtKB-UniRule"/>
</dbReference>
<dbReference type="GO" id="GO:0003735">
    <property type="term" value="F:structural constituent of ribosome"/>
    <property type="evidence" value="ECO:0007669"/>
    <property type="project" value="InterPro"/>
</dbReference>
<dbReference type="GO" id="GO:0006412">
    <property type="term" value="P:translation"/>
    <property type="evidence" value="ECO:0007669"/>
    <property type="project" value="UniProtKB-UniRule"/>
</dbReference>
<dbReference type="FunFam" id="1.10.287.1480:FF:000001">
    <property type="entry name" value="30S ribosomal protein S14"/>
    <property type="match status" value="1"/>
</dbReference>
<dbReference type="Gene3D" id="1.10.287.1480">
    <property type="match status" value="1"/>
</dbReference>
<dbReference type="HAMAP" id="MF_00537">
    <property type="entry name" value="Ribosomal_uS14_1"/>
    <property type="match status" value="1"/>
</dbReference>
<dbReference type="InterPro" id="IPR001209">
    <property type="entry name" value="Ribosomal_uS14"/>
</dbReference>
<dbReference type="InterPro" id="IPR023036">
    <property type="entry name" value="Ribosomal_uS14_bac/plastid"/>
</dbReference>
<dbReference type="InterPro" id="IPR018271">
    <property type="entry name" value="Ribosomal_uS14_CS"/>
</dbReference>
<dbReference type="NCBIfam" id="NF006477">
    <property type="entry name" value="PRK08881.1"/>
    <property type="match status" value="1"/>
</dbReference>
<dbReference type="PANTHER" id="PTHR19836">
    <property type="entry name" value="30S RIBOSOMAL PROTEIN S14"/>
    <property type="match status" value="1"/>
</dbReference>
<dbReference type="PANTHER" id="PTHR19836:SF19">
    <property type="entry name" value="SMALL RIBOSOMAL SUBUNIT PROTEIN US14M"/>
    <property type="match status" value="1"/>
</dbReference>
<dbReference type="Pfam" id="PF00253">
    <property type="entry name" value="Ribosomal_S14"/>
    <property type="match status" value="1"/>
</dbReference>
<dbReference type="SUPFAM" id="SSF57716">
    <property type="entry name" value="Glucocorticoid receptor-like (DNA-binding domain)"/>
    <property type="match status" value="1"/>
</dbReference>
<dbReference type="PROSITE" id="PS00527">
    <property type="entry name" value="RIBOSOMAL_S14"/>
    <property type="match status" value="1"/>
</dbReference>
<reference key="1">
    <citation type="journal article" date="2007" name="ISME J.">
        <title>Population level functional diversity in a microbial community revealed by comparative genomic and metagenomic analyses.</title>
        <authorList>
            <person name="Bhaya D."/>
            <person name="Grossman A.R."/>
            <person name="Steunou A.-S."/>
            <person name="Khuri N."/>
            <person name="Cohan F.M."/>
            <person name="Hamamura N."/>
            <person name="Melendrez M.C."/>
            <person name="Bateson M.M."/>
            <person name="Ward D.M."/>
            <person name="Heidelberg J.F."/>
        </authorList>
    </citation>
    <scope>NUCLEOTIDE SEQUENCE [LARGE SCALE GENOMIC DNA]</scope>
    <source>
        <strain>JA-2-3B'a(2-13)</strain>
    </source>
</reference>
<feature type="chain" id="PRO_1000128612" description="Small ribosomal subunit protein uS14">
    <location>
        <begin position="1"/>
        <end position="101"/>
    </location>
</feature>
<accession>Q2JLR9</accession>
<sequence length="101" mass="11980">MAKKSMIEREKKRQRLVEKYREKRQQLKAAMADPNIDQATRMELHAQLQKLPRASSPTRLRNRCWKTGRPRGYFRDFGLCRNSLREMAHRGLLPGVVKSSW</sequence>
<comment type="function">
    <text evidence="1">Binds 16S rRNA, required for the assembly of 30S particles and may also be responsible for determining the conformation of the 16S rRNA at the A site.</text>
</comment>
<comment type="subunit">
    <text evidence="1">Part of the 30S ribosomal subunit. Contacts proteins S3 and S10.</text>
</comment>
<comment type="similarity">
    <text evidence="1">Belongs to the universal ribosomal protein uS14 family.</text>
</comment>
<protein>
    <recommendedName>
        <fullName evidence="1">Small ribosomal subunit protein uS14</fullName>
    </recommendedName>
    <alternativeName>
        <fullName evidence="2">30S ribosomal protein S14</fullName>
    </alternativeName>
</protein>
<gene>
    <name evidence="1" type="primary">rpsN</name>
    <name evidence="1" type="synonym">rps14</name>
    <name type="ordered locus">CYB_1362</name>
</gene>
<name>RS14_SYNJB</name>